<organism>
    <name type="scientific">Homo sapiens</name>
    <name type="common">Human</name>
    <dbReference type="NCBI Taxonomy" id="9606"/>
    <lineage>
        <taxon>Eukaryota</taxon>
        <taxon>Metazoa</taxon>
        <taxon>Chordata</taxon>
        <taxon>Craniata</taxon>
        <taxon>Vertebrata</taxon>
        <taxon>Euteleostomi</taxon>
        <taxon>Mammalia</taxon>
        <taxon>Eutheria</taxon>
        <taxon>Euarchontoglires</taxon>
        <taxon>Primates</taxon>
        <taxon>Haplorrhini</taxon>
        <taxon>Catarrhini</taxon>
        <taxon>Hominidae</taxon>
        <taxon>Homo</taxon>
    </lineage>
</organism>
<comment type="function">
    <text>One gap junction consists of a cluster of closely packed pairs of transmembrane channels, the connexons, through which materials of low MW diffuse from one cell to a neighboring cell.</text>
</comment>
<comment type="subunit">
    <text evidence="1">A connexon is composed of a hexamer of connexins. Interacts with CNST (By similarity).</text>
</comment>
<comment type="interaction">
    <interactant intactId="EBI-13345609">
        <id>O95452</id>
    </interactant>
    <interactant intactId="EBI-3915253">
        <id>Q15125</id>
        <label>EBP</label>
    </interactant>
    <organismsDiffer>false</organismsDiffer>
    <experiments>3</experiments>
</comment>
<comment type="interaction">
    <interactant intactId="EBI-13345609">
        <id>O95452</id>
    </interactant>
    <interactant intactId="EBI-12808020">
        <id>Q9BZJ8</id>
        <label>GPR61</label>
    </interactant>
    <organismsDiffer>false</organismsDiffer>
    <experiments>3</experiments>
</comment>
<comment type="interaction">
    <interactant intactId="EBI-13345609">
        <id>O95452</id>
    </interactant>
    <interactant intactId="EBI-9018187">
        <id>P26715</id>
        <label>KLRC1</label>
    </interactant>
    <organismsDiffer>false</organismsDiffer>
    <experiments>3</experiments>
</comment>
<comment type="interaction">
    <interactant intactId="EBI-13345609">
        <id>O95452</id>
    </interactant>
    <interactant intactId="EBI-2820517">
        <id>Q8TAF8</id>
        <label>LHFPL5</label>
    </interactant>
    <organismsDiffer>false</organismsDiffer>
    <experiments>3</experiments>
</comment>
<comment type="interaction">
    <interactant intactId="EBI-13345609">
        <id>O95452</id>
    </interactant>
    <interactant intactId="EBI-12070086">
        <id>Q5J8X5</id>
        <label>MS4A13</label>
    </interactant>
    <organismsDiffer>false</organismsDiffer>
    <experiments>3</experiments>
</comment>
<comment type="interaction">
    <interactant intactId="EBI-13345609">
        <id>O95452</id>
    </interactant>
    <interactant intactId="EBI-8652744">
        <id>Q96IW7</id>
        <label>SEC22A</label>
    </interactant>
    <organismsDiffer>false</organismsDiffer>
    <experiments>3</experiments>
</comment>
<comment type="interaction">
    <interactant intactId="EBI-13345609">
        <id>O95452</id>
    </interactant>
    <interactant intactId="EBI-1058865">
        <id>O75396</id>
        <label>SEC22B</label>
    </interactant>
    <organismsDiffer>false</organismsDiffer>
    <experiments>3</experiments>
</comment>
<comment type="interaction">
    <interactant intactId="EBI-13345609">
        <id>O95452</id>
    </interactant>
    <interactant intactId="EBI-18159983">
        <id>Q3KNW5</id>
        <label>SLC10A6</label>
    </interactant>
    <organismsDiffer>false</organismsDiffer>
    <experiments>3</experiments>
</comment>
<comment type="interaction">
    <interactant intactId="EBI-13345609">
        <id>O95452</id>
    </interactant>
    <interactant intactId="EBI-10173151">
        <id>A2RU14</id>
        <label>TMEM218</label>
    </interactant>
    <organismsDiffer>false</organismsDiffer>
    <experiments>3</experiments>
</comment>
<comment type="interaction">
    <interactant intactId="EBI-13345609">
        <id>O95452</id>
    </interactant>
    <interactant intactId="EBI-2852148">
        <id>Q9H2L4</id>
        <label>TMEM60</label>
    </interactant>
    <organismsDiffer>false</organismsDiffer>
    <experiments>3</experiments>
</comment>
<comment type="subcellular location">
    <subcellularLocation>
        <location>Cell membrane</location>
        <topology>Multi-pass membrane protein</topology>
    </subcellularLocation>
    <subcellularLocation>
        <location>Cell junction</location>
        <location>Gap junction</location>
    </subcellularLocation>
</comment>
<comment type="disease" evidence="5 7">
    <disease id="DI-00431">
        <name>Ectodermal dysplasia 2, Clouston type</name>
        <acronym>ECTD2</acronym>
        <description>A form of ectodermal dysplasia, a heterogeneous group of disorders due to abnormal development of two or more ectodermal structures such as hair, teeth, nails and sweat glands, with or without any additional clinical sign. Each combination of clinical features represents a different type of ectodermal dysplasia. ECTD2 is an autosomal dominant condition characterized by atrichosis, nail hypoplasia and deformities, hyperpigmentation of the skin, normal teeth, normal sweat and sebaceous gland function. Palmoplantar hyperkeratosis is a frequent feature. Hearing impairment has been detected in few cases.</description>
        <dbReference type="MIM" id="129500"/>
    </disease>
    <text>The disease is caused by variants affecting the gene represented in this entry.</text>
</comment>
<comment type="disease" evidence="6 8">
    <disease id="DI-00853">
        <name>Deafness, autosomal recessive, 1B</name>
        <acronym>DFNB1B</acronym>
        <description>A form of non-syndromic sensorineural hearing loss. Sensorineural deafness results from damage to the neural receptors of the inner ear, the nerve pathways to the brain, or the area of the brain that receives sound information.</description>
        <dbReference type="MIM" id="612645"/>
    </disease>
    <text>The disease may be caused by variants affecting distinct genetic loci, including the gene represented in this entry.</text>
</comment>
<comment type="disease" evidence="3">
    <disease id="DI-00835">
        <name>Deafness, autosomal dominant, 3B</name>
        <acronym>DFNA3B</acronym>
        <description>A form of non-syndromic sensorineural hearing loss characterized by a variable phenotype, ranging from bilateral middle to high frequency hearing loss to profound sensorineural deafness. Sensorineural deafness results from damage to the neural receptors of the inner ear, the nerve pathways to the brain, or the area of the brain that receives sound information.</description>
        <dbReference type="MIM" id="612643"/>
    </disease>
    <text>The disease may be caused by variants affecting the gene represented in this entry.</text>
</comment>
<comment type="similarity">
    <text evidence="10">Belongs to the connexin family. Beta-type (group I) subfamily.</text>
</comment>
<comment type="online information" name="Connexin-deafness homepage">
    <link uri="http://perelman.crg.es/deafness/"/>
</comment>
<comment type="online information" name="Hereditary hearing loss homepage">
    <link uri="https://hereditaryhearingloss.org/dominant"/>
    <text>Gene page</text>
</comment>
<reference key="1">
    <citation type="journal article" date="1999" name="Nat. Genet.">
        <title>Mutations in GJB6 cause nonsyndromic autosomal dominant deafness at DFNA3 locus.</title>
        <authorList>
            <person name="Grifa A."/>
            <person name="Wagner C.A."/>
            <person name="D'Ambrosio L."/>
            <person name="Melchionda S."/>
            <person name="Bernardi F."/>
            <person name="Lopez-Bigas N."/>
            <person name="Rabionet R."/>
            <person name="Arbones M."/>
            <person name="Monica M.D."/>
            <person name="Estivill X."/>
            <person name="Zelante L."/>
            <person name="Lang F."/>
            <person name="Gasparini P."/>
        </authorList>
    </citation>
    <scope>NUCLEOTIDE SEQUENCE [GENOMIC DNA]</scope>
    <scope>VARIANT DFNA3B MET-5</scope>
</reference>
<reference key="2">
    <citation type="journal article" date="1999" name="Genomics">
        <title>Human connexin 30 (GJB6), a candidate gene for nonsyndromic hearing loss: molecular cloning, tissue-specific expression, and assignment to chromosome 13q12.</title>
        <authorList>
            <person name="Kelley P.M."/>
            <person name="Abe S."/>
            <person name="Askew J.W."/>
            <person name="Smith S.D."/>
            <person name="Usami S."/>
            <person name="Kimberling W.J."/>
        </authorList>
    </citation>
    <scope>NUCLEOTIDE SEQUENCE [GENOMIC DNA]</scope>
    <scope>VARIANTS GLY-139 AND THR-199</scope>
</reference>
<reference key="3">
    <citation type="submission" date="2003-05" db="EMBL/GenBank/DDBJ databases">
        <title>Human connexin30, updated ORF.</title>
        <authorList>
            <person name="Enriquez A.D."/>
            <person name="Scherer S.S."/>
        </authorList>
    </citation>
    <scope>NUCLEOTIDE SEQUENCE [MRNA]</scope>
    <source>
        <tissue>Corpus callosum</tissue>
    </source>
</reference>
<reference key="4">
    <citation type="journal article" date="2004" name="Nat. Genet.">
        <title>Complete sequencing and characterization of 21,243 full-length human cDNAs.</title>
        <authorList>
            <person name="Ota T."/>
            <person name="Suzuki Y."/>
            <person name="Nishikawa T."/>
            <person name="Otsuki T."/>
            <person name="Sugiyama T."/>
            <person name="Irie R."/>
            <person name="Wakamatsu A."/>
            <person name="Hayashi K."/>
            <person name="Sato H."/>
            <person name="Nagai K."/>
            <person name="Kimura K."/>
            <person name="Makita H."/>
            <person name="Sekine M."/>
            <person name="Obayashi M."/>
            <person name="Nishi T."/>
            <person name="Shibahara T."/>
            <person name="Tanaka T."/>
            <person name="Ishii S."/>
            <person name="Yamamoto J."/>
            <person name="Saito K."/>
            <person name="Kawai Y."/>
            <person name="Isono Y."/>
            <person name="Nakamura Y."/>
            <person name="Nagahari K."/>
            <person name="Murakami K."/>
            <person name="Yasuda T."/>
            <person name="Iwayanagi T."/>
            <person name="Wagatsuma M."/>
            <person name="Shiratori A."/>
            <person name="Sudo H."/>
            <person name="Hosoiri T."/>
            <person name="Kaku Y."/>
            <person name="Kodaira H."/>
            <person name="Kondo H."/>
            <person name="Sugawara M."/>
            <person name="Takahashi M."/>
            <person name="Kanda K."/>
            <person name="Yokoi T."/>
            <person name="Furuya T."/>
            <person name="Kikkawa E."/>
            <person name="Omura Y."/>
            <person name="Abe K."/>
            <person name="Kamihara K."/>
            <person name="Katsuta N."/>
            <person name="Sato K."/>
            <person name="Tanikawa M."/>
            <person name="Yamazaki M."/>
            <person name="Ninomiya K."/>
            <person name="Ishibashi T."/>
            <person name="Yamashita H."/>
            <person name="Murakawa K."/>
            <person name="Fujimori K."/>
            <person name="Tanai H."/>
            <person name="Kimata M."/>
            <person name="Watanabe M."/>
            <person name="Hiraoka S."/>
            <person name="Chiba Y."/>
            <person name="Ishida S."/>
            <person name="Ono Y."/>
            <person name="Takiguchi S."/>
            <person name="Watanabe S."/>
            <person name="Yosida M."/>
            <person name="Hotuta T."/>
            <person name="Kusano J."/>
            <person name="Kanehori K."/>
            <person name="Takahashi-Fujii A."/>
            <person name="Hara H."/>
            <person name="Tanase T.-O."/>
            <person name="Nomura Y."/>
            <person name="Togiya S."/>
            <person name="Komai F."/>
            <person name="Hara R."/>
            <person name="Takeuchi K."/>
            <person name="Arita M."/>
            <person name="Imose N."/>
            <person name="Musashino K."/>
            <person name="Yuuki H."/>
            <person name="Oshima A."/>
            <person name="Sasaki N."/>
            <person name="Aotsuka S."/>
            <person name="Yoshikawa Y."/>
            <person name="Matsunawa H."/>
            <person name="Ichihara T."/>
            <person name="Shiohata N."/>
            <person name="Sano S."/>
            <person name="Moriya S."/>
            <person name="Momiyama H."/>
            <person name="Satoh N."/>
            <person name="Takami S."/>
            <person name="Terashima Y."/>
            <person name="Suzuki O."/>
            <person name="Nakagawa S."/>
            <person name="Senoh A."/>
            <person name="Mizoguchi H."/>
            <person name="Goto Y."/>
            <person name="Shimizu F."/>
            <person name="Wakebe H."/>
            <person name="Hishigaki H."/>
            <person name="Watanabe T."/>
            <person name="Sugiyama A."/>
            <person name="Takemoto M."/>
            <person name="Kawakami B."/>
            <person name="Yamazaki M."/>
            <person name="Watanabe K."/>
            <person name="Kumagai A."/>
            <person name="Itakura S."/>
            <person name="Fukuzumi Y."/>
            <person name="Fujimori Y."/>
            <person name="Komiyama M."/>
            <person name="Tashiro H."/>
            <person name="Tanigami A."/>
            <person name="Fujiwara T."/>
            <person name="Ono T."/>
            <person name="Yamada K."/>
            <person name="Fujii Y."/>
            <person name="Ozaki K."/>
            <person name="Hirao M."/>
            <person name="Ohmori Y."/>
            <person name="Kawabata A."/>
            <person name="Hikiji T."/>
            <person name="Kobatake N."/>
            <person name="Inagaki H."/>
            <person name="Ikema Y."/>
            <person name="Okamoto S."/>
            <person name="Okitani R."/>
            <person name="Kawakami T."/>
            <person name="Noguchi S."/>
            <person name="Itoh T."/>
            <person name="Shigeta K."/>
            <person name="Senba T."/>
            <person name="Matsumura K."/>
            <person name="Nakajima Y."/>
            <person name="Mizuno T."/>
            <person name="Morinaga M."/>
            <person name="Sasaki M."/>
            <person name="Togashi T."/>
            <person name="Oyama M."/>
            <person name="Hata H."/>
            <person name="Watanabe M."/>
            <person name="Komatsu T."/>
            <person name="Mizushima-Sugano J."/>
            <person name="Satoh T."/>
            <person name="Shirai Y."/>
            <person name="Takahashi Y."/>
            <person name="Nakagawa K."/>
            <person name="Okumura K."/>
            <person name="Nagase T."/>
            <person name="Nomura N."/>
            <person name="Kikuchi H."/>
            <person name="Masuho Y."/>
            <person name="Yamashita R."/>
            <person name="Nakai K."/>
            <person name="Yada T."/>
            <person name="Nakamura Y."/>
            <person name="Ohara O."/>
            <person name="Isogai T."/>
            <person name="Sugano S."/>
        </authorList>
    </citation>
    <scope>NUCLEOTIDE SEQUENCE [LARGE SCALE MRNA]</scope>
    <source>
        <tissue>Brain cortex</tissue>
    </source>
</reference>
<reference key="5">
    <citation type="journal article" date="2005" name="DNA Res.">
        <title>Signal sequence and keyword trap in silico for selection of full-length human cDNAs encoding secretion or membrane proteins from oligo-capped cDNA libraries.</title>
        <authorList>
            <person name="Otsuki T."/>
            <person name="Ota T."/>
            <person name="Nishikawa T."/>
            <person name="Hayashi K."/>
            <person name="Suzuki Y."/>
            <person name="Yamamoto J."/>
            <person name="Wakamatsu A."/>
            <person name="Kimura K."/>
            <person name="Sakamoto K."/>
            <person name="Hatano N."/>
            <person name="Kawai Y."/>
            <person name="Ishii S."/>
            <person name="Saito K."/>
            <person name="Kojima S."/>
            <person name="Sugiyama T."/>
            <person name="Ono T."/>
            <person name="Okano K."/>
            <person name="Yoshikawa Y."/>
            <person name="Aotsuka S."/>
            <person name="Sasaki N."/>
            <person name="Hattori A."/>
            <person name="Okumura K."/>
            <person name="Nagai K."/>
            <person name="Sugano S."/>
            <person name="Isogai T."/>
        </authorList>
    </citation>
    <scope>NUCLEOTIDE SEQUENCE [LARGE SCALE MRNA]</scope>
    <source>
        <tissue>Thyroid</tissue>
    </source>
</reference>
<reference key="6">
    <citation type="journal article" date="2004" name="Nature">
        <title>The DNA sequence and analysis of human chromosome 13.</title>
        <authorList>
            <person name="Dunham A."/>
            <person name="Matthews L.H."/>
            <person name="Burton J."/>
            <person name="Ashurst J.L."/>
            <person name="Howe K.L."/>
            <person name="Ashcroft K.J."/>
            <person name="Beare D.M."/>
            <person name="Burford D.C."/>
            <person name="Hunt S.E."/>
            <person name="Griffiths-Jones S."/>
            <person name="Jones M.C."/>
            <person name="Keenan S.J."/>
            <person name="Oliver K."/>
            <person name="Scott C.E."/>
            <person name="Ainscough R."/>
            <person name="Almeida J.P."/>
            <person name="Ambrose K.D."/>
            <person name="Andrews D.T."/>
            <person name="Ashwell R.I.S."/>
            <person name="Babbage A.K."/>
            <person name="Bagguley C.L."/>
            <person name="Bailey J."/>
            <person name="Bannerjee R."/>
            <person name="Barlow K.F."/>
            <person name="Bates K."/>
            <person name="Beasley H."/>
            <person name="Bird C.P."/>
            <person name="Bray-Allen S."/>
            <person name="Brown A.J."/>
            <person name="Brown J.Y."/>
            <person name="Burrill W."/>
            <person name="Carder C."/>
            <person name="Carter N.P."/>
            <person name="Chapman J.C."/>
            <person name="Clamp M.E."/>
            <person name="Clark S.Y."/>
            <person name="Clarke G."/>
            <person name="Clee C.M."/>
            <person name="Clegg S.C."/>
            <person name="Cobley V."/>
            <person name="Collins J.E."/>
            <person name="Corby N."/>
            <person name="Coville G.J."/>
            <person name="Deloukas P."/>
            <person name="Dhami P."/>
            <person name="Dunham I."/>
            <person name="Dunn M."/>
            <person name="Earthrowl M.E."/>
            <person name="Ellington A.G."/>
            <person name="Faulkner L."/>
            <person name="Frankish A.G."/>
            <person name="Frankland J."/>
            <person name="French L."/>
            <person name="Garner P."/>
            <person name="Garnett J."/>
            <person name="Gilbert J.G.R."/>
            <person name="Gilson C.J."/>
            <person name="Ghori J."/>
            <person name="Grafham D.V."/>
            <person name="Gribble S.M."/>
            <person name="Griffiths C."/>
            <person name="Hall R.E."/>
            <person name="Hammond S."/>
            <person name="Harley J.L."/>
            <person name="Hart E.A."/>
            <person name="Heath P.D."/>
            <person name="Howden P.J."/>
            <person name="Huckle E.J."/>
            <person name="Hunt P.J."/>
            <person name="Hunt A.R."/>
            <person name="Johnson C."/>
            <person name="Johnson D."/>
            <person name="Kay M."/>
            <person name="Kimberley A.M."/>
            <person name="King A."/>
            <person name="Laird G.K."/>
            <person name="Langford C.J."/>
            <person name="Lawlor S."/>
            <person name="Leongamornlert D.A."/>
            <person name="Lloyd D.M."/>
            <person name="Lloyd C."/>
            <person name="Loveland J.E."/>
            <person name="Lovell J."/>
            <person name="Martin S."/>
            <person name="Mashreghi-Mohammadi M."/>
            <person name="McLaren S.J."/>
            <person name="McMurray A."/>
            <person name="Milne S."/>
            <person name="Moore M.J.F."/>
            <person name="Nickerson T."/>
            <person name="Palmer S.A."/>
            <person name="Pearce A.V."/>
            <person name="Peck A.I."/>
            <person name="Pelan S."/>
            <person name="Phillimore B."/>
            <person name="Porter K.M."/>
            <person name="Rice C.M."/>
            <person name="Searle S."/>
            <person name="Sehra H.K."/>
            <person name="Shownkeen R."/>
            <person name="Skuce C.D."/>
            <person name="Smith M."/>
            <person name="Steward C.A."/>
            <person name="Sycamore N."/>
            <person name="Tester J."/>
            <person name="Thomas D.W."/>
            <person name="Tracey A."/>
            <person name="Tromans A."/>
            <person name="Tubby B."/>
            <person name="Wall M."/>
            <person name="Wallis J.M."/>
            <person name="West A.P."/>
            <person name="Whitehead S.L."/>
            <person name="Willey D.L."/>
            <person name="Wilming L."/>
            <person name="Wray P.W."/>
            <person name="Wright M.W."/>
            <person name="Young L."/>
            <person name="Coulson A."/>
            <person name="Durbin R.M."/>
            <person name="Hubbard T."/>
            <person name="Sulston J.E."/>
            <person name="Beck S."/>
            <person name="Bentley D.R."/>
            <person name="Rogers J."/>
            <person name="Ross M.T."/>
        </authorList>
    </citation>
    <scope>NUCLEOTIDE SEQUENCE [LARGE SCALE GENOMIC DNA]</scope>
</reference>
<reference key="7">
    <citation type="submission" date="2005-07" db="EMBL/GenBank/DDBJ databases">
        <authorList>
            <person name="Mural R.J."/>
            <person name="Istrail S."/>
            <person name="Sutton G.G."/>
            <person name="Florea L."/>
            <person name="Halpern A.L."/>
            <person name="Mobarry C.M."/>
            <person name="Lippert R."/>
            <person name="Walenz B."/>
            <person name="Shatkay H."/>
            <person name="Dew I."/>
            <person name="Miller J.R."/>
            <person name="Flanigan M.J."/>
            <person name="Edwards N.J."/>
            <person name="Bolanos R."/>
            <person name="Fasulo D."/>
            <person name="Halldorsson B.V."/>
            <person name="Hannenhalli S."/>
            <person name="Turner R."/>
            <person name="Yooseph S."/>
            <person name="Lu F."/>
            <person name="Nusskern D.R."/>
            <person name="Shue B.C."/>
            <person name="Zheng X.H."/>
            <person name="Zhong F."/>
            <person name="Delcher A.L."/>
            <person name="Huson D.H."/>
            <person name="Kravitz S.A."/>
            <person name="Mouchard L."/>
            <person name="Reinert K."/>
            <person name="Remington K.A."/>
            <person name="Clark A.G."/>
            <person name="Waterman M.S."/>
            <person name="Eichler E.E."/>
            <person name="Adams M.D."/>
            <person name="Hunkapiller M.W."/>
            <person name="Myers E.W."/>
            <person name="Venter J.C."/>
        </authorList>
    </citation>
    <scope>NUCLEOTIDE SEQUENCE [LARGE SCALE GENOMIC DNA]</scope>
</reference>
<reference key="8">
    <citation type="journal article" date="2004" name="Genome Res.">
        <title>The status, quality, and expansion of the NIH full-length cDNA project: the Mammalian Gene Collection (MGC).</title>
        <authorList>
            <consortium name="The MGC Project Team"/>
        </authorList>
    </citation>
    <scope>NUCLEOTIDE SEQUENCE [LARGE SCALE MRNA]</scope>
    <source>
        <tissue>Brain</tissue>
    </source>
</reference>
<reference key="9">
    <citation type="journal article" date="2005" name="Gene">
        <title>Gene structure and promoter analysis of the human GJB6 gene encoding connexin 30.</title>
        <authorList>
            <person name="Essenfelder G.M."/>
            <person name="Larderet G."/>
            <person name="Waksman G."/>
            <person name="Lamartine J."/>
        </authorList>
    </citation>
    <scope>NUCLEOTIDE SEQUENCE [MRNA] OF 1-40</scope>
    <scope>GENE STRUCTURE</scope>
    <source>
        <tissue>Hair follicle</tissue>
    </source>
</reference>
<reference key="10">
    <citation type="journal article" date="2002" name="N. Engl. J. Med.">
        <title>A deletion involving the connexin 30 gene in nonsyndromic hearing impairment.</title>
        <authorList>
            <person name="del Castillo I."/>
            <person name="Villamar M."/>
            <person name="Moreno-Pelayo M.A."/>
            <person name="del Castillo F.J."/>
            <person name="Alvarez A."/>
            <person name="Telleria D."/>
            <person name="Menendez I."/>
            <person name="Moreno F."/>
        </authorList>
    </citation>
    <scope>INVOLVEMENT IN DFNB1B</scope>
</reference>
<reference key="11">
    <citation type="journal article" date="2005" name="J. Med. Genet.">
        <title>A novel deletion involving the connexin-30 gene, del(GJB6-d13s1854), found in trans with mutations in the GJB2 gene (connexin-26) in subjects with DFNB1 non-syndromic hearing impairment.</title>
        <authorList>
            <person name="del Castillo F.J."/>
            <person name="Rodriguez-Ballesteros M."/>
            <person name="Alvarez A."/>
            <person name="Hutchin T."/>
            <person name="Leonardi E."/>
            <person name="de Oliveira C.A."/>
            <person name="Azaiez H."/>
            <person name="Brownstein Z."/>
            <person name="Avenarius M.R."/>
            <person name="Marlin S."/>
            <person name="Pandya A."/>
            <person name="Shahin H."/>
            <person name="Siemering K.R."/>
            <person name="Weil D."/>
            <person name="Wuyts W."/>
            <person name="Aguirre L.A."/>
            <person name="Martin Y."/>
            <person name="Moreno-Pelayo M.A."/>
            <person name="Villamar M."/>
            <person name="Avraham K.B."/>
            <person name="Dahl H.H."/>
            <person name="Kanaan M."/>
            <person name="Nance W.E."/>
            <person name="Petit C."/>
            <person name="Smith R.J."/>
            <person name="Van Camp G."/>
            <person name="Sartorato E.L."/>
            <person name="Murgia A."/>
            <person name="Moreno F."/>
            <person name="del Castillo I."/>
        </authorList>
    </citation>
    <scope>INVOLVEMENT IN DFNB1B</scope>
</reference>
<reference key="12">
    <citation type="journal article" date="2000" name="Nat. Genet.">
        <title>Mutations in GJB6 cause hidrotic ectodermal dysplasia.</title>
        <authorList>
            <person name="Lamartine J."/>
            <person name="Munhoz Essenfelder G."/>
            <person name="Kibar Z."/>
            <person name="Lanneluc I."/>
            <person name="Callouet E."/>
            <person name="Laoudj D."/>
            <person name="Lemaitre G."/>
            <person name="Hand C."/>
            <person name="Hayflick S.J."/>
            <person name="Zonana J."/>
            <person name="Antonarakis S."/>
            <person name="Radhakrishna U."/>
            <person name="Kelsell D.P."/>
            <person name="Christianson A.L."/>
            <person name="Pitaval A."/>
            <person name="Der Kaloustian V."/>
            <person name="Fraser C."/>
            <person name="Blanchet-Bardon C."/>
            <person name="Rouleau G.A."/>
            <person name="Waksman G."/>
        </authorList>
    </citation>
    <scope>VARIANTS ECTD2 ARG-11 AND VAL-88</scope>
</reference>
<reference key="13">
    <citation type="journal article" date="2002" name="J. Invest. Dermatol.">
        <title>A novel connexin 30 mutation in Clouston syndrome.</title>
        <authorList>
            <person name="Smith F.J."/>
            <person name="Morley S.M."/>
            <person name="McLean W.H.I."/>
        </authorList>
    </citation>
    <scope>VARIANT ECTD2 GLU-37</scope>
</reference>
<reference key="14">
    <citation type="journal article" date="2009" name="Br. J. Dermatol.">
        <title>Novel mutation p.Gly59Arg in GJB6 encoding connexin 30 underlies palmoplantar keratoderma with pseudoainhum, knuckle pads and hearing loss.</title>
        <authorList>
            <person name="Nemoto-Hasebe I."/>
            <person name="Akiyama M."/>
            <person name="Kudo S."/>
            <person name="Ishiko A."/>
            <person name="Tanaka A."/>
            <person name="Arita K."/>
            <person name="Shimizu H."/>
        </authorList>
    </citation>
    <scope>VARIANT ARG-59</scope>
</reference>
<sequence length="261" mass="30387">MDWGTLHTFIGGVNKHSTSIGKVWITVIFIFRVMILVVAAQEVWGDEQEDFVCNTLQPGCKNVCYDHFFPVSHIRLWALQLIFVSTPALLVAMHVAYYRHETTRKFRRGEKRNDFKDIEDIKKQKVRIEGSLWWTYTSSIFFRIIFEAAFMYVFYFLYNGYHLPWVLKCGIDPCPNLVDCFISRPTEKTVFTIFMISASVICMLLNVAELCYLLLKVCFRRSKRAQTQKNHPNHALKESKQNEMNELISDSGQNAITGFPS</sequence>
<feature type="chain" id="PRO_0000057871" description="Gap junction beta-6 protein">
    <location>
        <begin position="1"/>
        <end position="261"/>
    </location>
</feature>
<feature type="topological domain" description="Cytoplasmic" evidence="2">
    <location>
        <begin position="1"/>
        <end position="22"/>
    </location>
</feature>
<feature type="transmembrane region" description="Helical" evidence="2">
    <location>
        <begin position="23"/>
        <end position="45"/>
    </location>
</feature>
<feature type="topological domain" description="Extracellular" evidence="2">
    <location>
        <begin position="46"/>
        <end position="75"/>
    </location>
</feature>
<feature type="transmembrane region" description="Helical" evidence="2">
    <location>
        <begin position="76"/>
        <end position="98"/>
    </location>
</feature>
<feature type="topological domain" description="Cytoplasmic" evidence="2">
    <location>
        <begin position="99"/>
        <end position="131"/>
    </location>
</feature>
<feature type="transmembrane region" description="Helical" evidence="2">
    <location>
        <begin position="132"/>
        <end position="154"/>
    </location>
</feature>
<feature type="topological domain" description="Extracellular" evidence="2">
    <location>
        <begin position="155"/>
        <end position="192"/>
    </location>
</feature>
<feature type="transmembrane region" description="Helical" evidence="2">
    <location>
        <begin position="193"/>
        <end position="215"/>
    </location>
</feature>
<feature type="topological domain" description="Cytoplasmic" evidence="2">
    <location>
        <begin position="216"/>
        <end position="261"/>
    </location>
</feature>
<feature type="sequence variant" id="VAR_008711" description="In DFNA3B; uncertain significance; dbSNP:rs104894414." evidence="3">
    <original>T</original>
    <variation>M</variation>
    <location>
        <position position="5"/>
    </location>
</feature>
<feature type="sequence variant" id="VAR_015696" description="In ECTD2; dbSNP:rs104894415." evidence="5">
    <original>G</original>
    <variation>R</variation>
    <location>
        <position position="11"/>
    </location>
</feature>
<feature type="sequence variant" id="VAR_016838" description="In ECTD2; dbSNP:rs104894416." evidence="7">
    <original>V</original>
    <variation>E</variation>
    <location>
        <position position="37"/>
    </location>
</feature>
<feature type="sequence variant" id="VAR_057960" description="Found in one patient with a syndrome resembling Vohwinkel and Bart-Pumphrey syndromes." evidence="9">
    <original>G</original>
    <variation>R</variation>
    <location>
        <position position="59"/>
    </location>
</feature>
<feature type="sequence variant" id="VAR_015697" description="In ECTD2; dbSNP:rs28937872." evidence="5">
    <original>A</original>
    <variation>V</variation>
    <location>
        <position position="88"/>
    </location>
</feature>
<feature type="sequence variant" id="VAR_022424" evidence="4">
    <original>S</original>
    <variation>G</variation>
    <location>
        <position position="139"/>
    </location>
</feature>
<feature type="sequence variant" id="VAR_048825" description="In dbSNP:rs35277762.">
    <original>N</original>
    <variation>S</variation>
    <location>
        <position position="159"/>
    </location>
</feature>
<feature type="sequence variant" id="VAR_022425" description="In dbSNP:rs111033338." evidence="4">
    <original>S</original>
    <variation>T</variation>
    <location>
        <position position="199"/>
    </location>
</feature>
<feature type="sequence conflict" description="In Ref. 9; AAV67951." evidence="10" ref="9">
    <original>G</original>
    <variation>E</variation>
    <location>
        <position position="11"/>
    </location>
</feature>
<feature type="sequence conflict" description="In Ref. 1; CAA06611." evidence="10" ref="1">
    <original>Q</original>
    <variation>H</variation>
    <location>
        <position position="124"/>
    </location>
</feature>
<proteinExistence type="evidence at protein level"/>
<protein>
    <recommendedName>
        <fullName>Gap junction beta-6 protein</fullName>
    </recommendedName>
    <alternativeName>
        <fullName>Connexin-30</fullName>
        <shortName>Cx30</shortName>
    </alternativeName>
</protein>
<accession>O95452</accession>
<accession>B3KQN2</accession>
<accession>Q5Q1H9</accession>
<accession>Q5Q1I0</accession>
<accession>Q5Q1I1</accession>
<accession>Q5T5U0</accession>
<accession>Q8IUP0</accession>
<keyword id="KW-0965">Cell junction</keyword>
<keyword id="KW-1003">Cell membrane</keyword>
<keyword id="KW-0209">Deafness</keyword>
<keyword id="KW-0225">Disease variant</keyword>
<keyword id="KW-0038">Ectodermal dysplasia</keyword>
<keyword id="KW-0303">Gap junction</keyword>
<keyword id="KW-1009">Hearing</keyword>
<keyword id="KW-0472">Membrane</keyword>
<keyword id="KW-1010">Non-syndromic deafness</keyword>
<keyword id="KW-1007">Palmoplantar keratoderma</keyword>
<keyword id="KW-1267">Proteomics identification</keyword>
<keyword id="KW-1185">Reference proteome</keyword>
<keyword id="KW-0812">Transmembrane</keyword>
<keyword id="KW-1133">Transmembrane helix</keyword>
<gene>
    <name type="primary">GJB6</name>
</gene>
<evidence type="ECO:0000250" key="1"/>
<evidence type="ECO:0000255" key="2"/>
<evidence type="ECO:0000269" key="3">
    <source>
    </source>
</evidence>
<evidence type="ECO:0000269" key="4">
    <source>
    </source>
</evidence>
<evidence type="ECO:0000269" key="5">
    <source>
    </source>
</evidence>
<evidence type="ECO:0000269" key="6">
    <source>
    </source>
</evidence>
<evidence type="ECO:0000269" key="7">
    <source>
    </source>
</evidence>
<evidence type="ECO:0000269" key="8">
    <source>
    </source>
</evidence>
<evidence type="ECO:0000269" key="9">
    <source>
    </source>
</evidence>
<evidence type="ECO:0000305" key="10"/>
<name>CXB6_HUMAN</name>
<dbReference type="EMBL" id="AJ005585">
    <property type="protein sequence ID" value="CAA06611.1"/>
    <property type="molecule type" value="Genomic_DNA"/>
</dbReference>
<dbReference type="EMBL" id="AY297110">
    <property type="protein sequence ID" value="AAP51162.1"/>
    <property type="molecule type" value="mRNA"/>
</dbReference>
<dbReference type="EMBL" id="AK289592">
    <property type="protein sequence ID" value="BAF82281.1"/>
    <property type="molecule type" value="mRNA"/>
</dbReference>
<dbReference type="EMBL" id="AK075247">
    <property type="protein sequence ID" value="BAG52094.1"/>
    <property type="molecule type" value="mRNA"/>
</dbReference>
<dbReference type="EMBL" id="AL355984">
    <property type="status" value="NOT_ANNOTATED_CDS"/>
    <property type="molecule type" value="Genomic_DNA"/>
</dbReference>
<dbReference type="EMBL" id="CH471075">
    <property type="protein sequence ID" value="EAX08254.1"/>
    <property type="molecule type" value="Genomic_DNA"/>
</dbReference>
<dbReference type="EMBL" id="BC038934">
    <property type="protein sequence ID" value="AAH38934.1"/>
    <property type="molecule type" value="mRNA"/>
</dbReference>
<dbReference type="EMBL" id="AY789474">
    <property type="protein sequence ID" value="AAV67951.1"/>
    <property type="molecule type" value="mRNA"/>
</dbReference>
<dbReference type="EMBL" id="AY789475">
    <property type="protein sequence ID" value="AAV67952.1"/>
    <property type="molecule type" value="mRNA"/>
</dbReference>
<dbReference type="EMBL" id="AY789476">
    <property type="protein sequence ID" value="AAV67953.1"/>
    <property type="molecule type" value="mRNA"/>
</dbReference>
<dbReference type="CCDS" id="CCDS9291.1"/>
<dbReference type="RefSeq" id="NP_001103689.1">
    <property type="nucleotide sequence ID" value="NM_001110219.3"/>
</dbReference>
<dbReference type="RefSeq" id="NP_001103690.1">
    <property type="nucleotide sequence ID" value="NM_001110220.3"/>
</dbReference>
<dbReference type="RefSeq" id="NP_001103691.1">
    <property type="nucleotide sequence ID" value="NM_001110221.3"/>
</dbReference>
<dbReference type="RefSeq" id="NP_001357019.1">
    <property type="nucleotide sequence ID" value="NM_001370090.1"/>
</dbReference>
<dbReference type="RefSeq" id="NP_001357020.1">
    <property type="nucleotide sequence ID" value="NM_001370091.1"/>
</dbReference>
<dbReference type="RefSeq" id="NP_001357021.1">
    <property type="nucleotide sequence ID" value="NM_001370092.1"/>
</dbReference>
<dbReference type="RefSeq" id="NP_006774.2">
    <property type="nucleotide sequence ID" value="NM_006783.4"/>
</dbReference>
<dbReference type="RefSeq" id="XP_016875846.1">
    <property type="nucleotide sequence ID" value="XM_017020357.1"/>
</dbReference>
<dbReference type="RefSeq" id="XP_016875847.1">
    <property type="nucleotide sequence ID" value="XM_017020358.1"/>
</dbReference>
<dbReference type="RefSeq" id="XP_016875848.1">
    <property type="nucleotide sequence ID" value="XM_017020359.1"/>
</dbReference>
<dbReference type="RefSeq" id="XP_016875849.1">
    <property type="nucleotide sequence ID" value="XM_017020360.1"/>
</dbReference>
<dbReference type="RefSeq" id="XP_047286012.1">
    <property type="nucleotide sequence ID" value="XM_047430056.1"/>
</dbReference>
<dbReference type="RefSeq" id="XP_047286013.1">
    <property type="nucleotide sequence ID" value="XM_047430057.1"/>
</dbReference>
<dbReference type="RefSeq" id="XP_054230010.1">
    <property type="nucleotide sequence ID" value="XM_054374035.1"/>
</dbReference>
<dbReference type="RefSeq" id="XP_054230011.1">
    <property type="nucleotide sequence ID" value="XM_054374036.1"/>
</dbReference>
<dbReference type="SMR" id="O95452"/>
<dbReference type="BioGRID" id="116018">
    <property type="interactions" value="16"/>
</dbReference>
<dbReference type="CORUM" id="O95452"/>
<dbReference type="FunCoup" id="O95452">
    <property type="interactions" value="14"/>
</dbReference>
<dbReference type="IntAct" id="O95452">
    <property type="interactions" value="14"/>
</dbReference>
<dbReference type="MINT" id="O95452"/>
<dbReference type="STRING" id="9606.ENSP00000494468"/>
<dbReference type="PhosphoSitePlus" id="O95452"/>
<dbReference type="BioMuta" id="GJB6"/>
<dbReference type="MassIVE" id="O95452"/>
<dbReference type="PaxDb" id="9606-ENSP00000348521"/>
<dbReference type="PeptideAtlas" id="O95452"/>
<dbReference type="ProteomicsDB" id="50885"/>
<dbReference type="Antibodypedia" id="6442">
    <property type="antibodies" value="230 antibodies from 29 providers"/>
</dbReference>
<dbReference type="DNASU" id="10804"/>
<dbReference type="Ensembl" id="ENST00000241124.11">
    <property type="protein sequence ID" value="ENSP00000241124.6"/>
    <property type="gene ID" value="ENSG00000121742.19"/>
</dbReference>
<dbReference type="Ensembl" id="ENST00000400065.7">
    <property type="protein sequence ID" value="ENSP00000382938.3"/>
    <property type="gene ID" value="ENSG00000121742.19"/>
</dbReference>
<dbReference type="Ensembl" id="ENST00000400066.8">
    <property type="protein sequence ID" value="ENSP00000382939.3"/>
    <property type="gene ID" value="ENSG00000121742.19"/>
</dbReference>
<dbReference type="Ensembl" id="ENST00000636852.1">
    <property type="protein sequence ID" value="ENSP00000489698.1"/>
    <property type="gene ID" value="ENSG00000121742.19"/>
</dbReference>
<dbReference type="Ensembl" id="ENST00000643121.1">
    <property type="protein sequence ID" value="ENSP00000494468.1"/>
    <property type="gene ID" value="ENSG00000121742.19"/>
</dbReference>
<dbReference type="Ensembl" id="ENST00000643211.1">
    <property type="protein sequence ID" value="ENSP00000495841.1"/>
    <property type="gene ID" value="ENSG00000121742.19"/>
</dbReference>
<dbReference type="Ensembl" id="ENST00000644283.1">
    <property type="protein sequence ID" value="ENSP00000495320.1"/>
    <property type="gene ID" value="ENSG00000121742.19"/>
</dbReference>
<dbReference type="Ensembl" id="ENST00000644667.1">
    <property type="protein sequence ID" value="ENSP00000493621.1"/>
    <property type="gene ID" value="ENSG00000121742.19"/>
</dbReference>
<dbReference type="Ensembl" id="ENST00000647029.1">
    <property type="protein sequence ID" value="ENSP00000493834.1"/>
    <property type="gene ID" value="ENSG00000121742.19"/>
</dbReference>
<dbReference type="Ensembl" id="ENST00000647243.1">
    <property type="protein sequence ID" value="ENSP00000494733.1"/>
    <property type="gene ID" value="ENSG00000121742.19"/>
</dbReference>
<dbReference type="GeneID" id="10804"/>
<dbReference type="KEGG" id="hsa:10804"/>
<dbReference type="MANE-Select" id="ENST00000647029.1">
    <property type="protein sequence ID" value="ENSP00000493834.1"/>
    <property type="RefSeq nucleotide sequence ID" value="NM_001110219.3"/>
    <property type="RefSeq protein sequence ID" value="NP_001103689.1"/>
</dbReference>
<dbReference type="UCSC" id="uc001umz.5">
    <property type="organism name" value="human"/>
</dbReference>
<dbReference type="AGR" id="HGNC:4288"/>
<dbReference type="CTD" id="10804"/>
<dbReference type="DisGeNET" id="10804"/>
<dbReference type="GeneCards" id="GJB6"/>
<dbReference type="GeneReviews" id="GJB6"/>
<dbReference type="HGNC" id="HGNC:4288">
    <property type="gene designation" value="GJB6"/>
</dbReference>
<dbReference type="HPA" id="ENSG00000121742">
    <property type="expression patterns" value="Tissue enhanced (bone marrow, brain, esophagus, vagina)"/>
</dbReference>
<dbReference type="MalaCards" id="GJB6"/>
<dbReference type="MIM" id="129500">
    <property type="type" value="phenotype"/>
</dbReference>
<dbReference type="MIM" id="604418">
    <property type="type" value="gene"/>
</dbReference>
<dbReference type="MIM" id="612643">
    <property type="type" value="phenotype"/>
</dbReference>
<dbReference type="MIM" id="612645">
    <property type="type" value="phenotype"/>
</dbReference>
<dbReference type="neXtProt" id="NX_O95452"/>
<dbReference type="OpenTargets" id="ENSG00000121742"/>
<dbReference type="Orphanet" id="189">
    <property type="disease" value="Hidrotic ectodermal dysplasia"/>
</dbReference>
<dbReference type="Orphanet" id="477">
    <property type="disease" value="KID syndrome"/>
</dbReference>
<dbReference type="Orphanet" id="90635">
    <property type="disease" value="Rare autosomal dominant non-syndromic sensorineural deafness type DFNA"/>
</dbReference>
<dbReference type="Orphanet" id="90636">
    <property type="disease" value="Rare autosomal recessive non-syndromic sensorineural deafness type DFNB"/>
</dbReference>
<dbReference type="PharmGKB" id="PA28699"/>
<dbReference type="VEuPathDB" id="HostDB:ENSG00000121742"/>
<dbReference type="eggNOG" id="ENOG502QWM8">
    <property type="taxonomic scope" value="Eukaryota"/>
</dbReference>
<dbReference type="GeneTree" id="ENSGT01030000234513"/>
<dbReference type="HOGENOM" id="CLU_037388_4_1_1"/>
<dbReference type="InParanoid" id="O95452"/>
<dbReference type="OMA" id="PNHAIKE"/>
<dbReference type="OrthoDB" id="8934037at2759"/>
<dbReference type="PAN-GO" id="O95452">
    <property type="GO annotations" value="3 GO annotations based on evolutionary models"/>
</dbReference>
<dbReference type="PhylomeDB" id="O95452"/>
<dbReference type="TreeFam" id="TF329606"/>
<dbReference type="PathwayCommons" id="O95452"/>
<dbReference type="Reactome" id="R-HSA-190861">
    <property type="pathway name" value="Gap junction assembly"/>
</dbReference>
<dbReference type="SignaLink" id="O95452"/>
<dbReference type="BioGRID-ORCS" id="10804">
    <property type="hits" value="13 hits in 1149 CRISPR screens"/>
</dbReference>
<dbReference type="ChiTaRS" id="GJB6">
    <property type="organism name" value="human"/>
</dbReference>
<dbReference type="GeneWiki" id="GJB6"/>
<dbReference type="GenomeRNAi" id="10804"/>
<dbReference type="Pharos" id="O95452">
    <property type="development level" value="Tbio"/>
</dbReference>
<dbReference type="PRO" id="PR:O95452"/>
<dbReference type="Proteomes" id="UP000005640">
    <property type="component" value="Chromosome 13"/>
</dbReference>
<dbReference type="RNAct" id="O95452">
    <property type="molecule type" value="protein"/>
</dbReference>
<dbReference type="Bgee" id="ENSG00000121742">
    <property type="expression patterns" value="Expressed in upper arm skin and 132 other cell types or tissues"/>
</dbReference>
<dbReference type="ExpressionAtlas" id="O95452">
    <property type="expression patterns" value="baseline and differential"/>
</dbReference>
<dbReference type="GO" id="GO:0005884">
    <property type="term" value="C:actin filament"/>
    <property type="evidence" value="ECO:0000315"/>
    <property type="project" value="ARUK-UCL"/>
</dbReference>
<dbReference type="GO" id="GO:0016324">
    <property type="term" value="C:apical plasma membrane"/>
    <property type="evidence" value="ECO:0007669"/>
    <property type="project" value="Ensembl"/>
</dbReference>
<dbReference type="GO" id="GO:0030054">
    <property type="term" value="C:cell junction"/>
    <property type="evidence" value="ECO:0000314"/>
    <property type="project" value="HPA"/>
</dbReference>
<dbReference type="GO" id="GO:0005922">
    <property type="term" value="C:connexin complex"/>
    <property type="evidence" value="ECO:0000318"/>
    <property type="project" value="GO_Central"/>
</dbReference>
<dbReference type="GO" id="GO:0005921">
    <property type="term" value="C:gap junction"/>
    <property type="evidence" value="ECO:0000315"/>
    <property type="project" value="ARUK-UCL"/>
</dbReference>
<dbReference type="GO" id="GO:0051015">
    <property type="term" value="F:actin filament binding"/>
    <property type="evidence" value="ECO:0000314"/>
    <property type="project" value="ARUK-UCL"/>
</dbReference>
<dbReference type="GO" id="GO:0048487">
    <property type="term" value="F:beta-tubulin binding"/>
    <property type="evidence" value="ECO:0000314"/>
    <property type="project" value="ARUK-UCL"/>
</dbReference>
<dbReference type="GO" id="GO:0005243">
    <property type="term" value="F:gap junction channel activity"/>
    <property type="evidence" value="ECO:0000314"/>
    <property type="project" value="ARUK-UCL"/>
</dbReference>
<dbReference type="GO" id="GO:1903763">
    <property type="term" value="F:gap junction channel activity involved in cell communication by electrical coupling"/>
    <property type="evidence" value="ECO:0000314"/>
    <property type="project" value="ARUK-UCL"/>
</dbReference>
<dbReference type="GO" id="GO:0008017">
    <property type="term" value="F:microtubule binding"/>
    <property type="evidence" value="ECO:0000314"/>
    <property type="project" value="ARUK-UCL"/>
</dbReference>
<dbReference type="GO" id="GO:0007267">
    <property type="term" value="P:cell-cell signaling"/>
    <property type="evidence" value="ECO:0000318"/>
    <property type="project" value="GO_Central"/>
</dbReference>
<dbReference type="GO" id="GO:0071333">
    <property type="term" value="P:cellular response to glucose stimulus"/>
    <property type="evidence" value="ECO:0007669"/>
    <property type="project" value="Ensembl"/>
</dbReference>
<dbReference type="GO" id="GO:0042471">
    <property type="term" value="P:ear morphogenesis"/>
    <property type="evidence" value="ECO:0007669"/>
    <property type="project" value="Ensembl"/>
</dbReference>
<dbReference type="GO" id="GO:0016264">
    <property type="term" value="P:gap junction assembly"/>
    <property type="evidence" value="ECO:0000315"/>
    <property type="project" value="ARUK-UCL"/>
</dbReference>
<dbReference type="GO" id="GO:1990349">
    <property type="term" value="P:gap junction-mediated intercellular transport"/>
    <property type="evidence" value="ECO:0000314"/>
    <property type="project" value="ARUK-UCL"/>
</dbReference>
<dbReference type="GO" id="GO:0048839">
    <property type="term" value="P:inner ear development"/>
    <property type="evidence" value="ECO:0007669"/>
    <property type="project" value="Ensembl"/>
</dbReference>
<dbReference type="GO" id="GO:0035633">
    <property type="term" value="P:maintenance of blood-brain barrier"/>
    <property type="evidence" value="ECO:0000303"/>
    <property type="project" value="ARUK-UCL"/>
</dbReference>
<dbReference type="GO" id="GO:0008285">
    <property type="term" value="P:negative regulation of cell population proliferation"/>
    <property type="evidence" value="ECO:0007669"/>
    <property type="project" value="Ensembl"/>
</dbReference>
<dbReference type="GO" id="GO:0051602">
    <property type="term" value="P:response to electrical stimulus"/>
    <property type="evidence" value="ECO:0007669"/>
    <property type="project" value="Ensembl"/>
</dbReference>
<dbReference type="GO" id="GO:0032496">
    <property type="term" value="P:response to lipopolysaccharide"/>
    <property type="evidence" value="ECO:0007669"/>
    <property type="project" value="Ensembl"/>
</dbReference>
<dbReference type="GO" id="GO:0007605">
    <property type="term" value="P:sensory perception of sound"/>
    <property type="evidence" value="ECO:0000304"/>
    <property type="project" value="ProtInc"/>
</dbReference>
<dbReference type="GO" id="GO:0003163">
    <property type="term" value="P:sinoatrial node development"/>
    <property type="evidence" value="ECO:0000303"/>
    <property type="project" value="BHF-UCL"/>
</dbReference>
<dbReference type="GO" id="GO:0055085">
    <property type="term" value="P:transmembrane transport"/>
    <property type="evidence" value="ECO:0000314"/>
    <property type="project" value="ARUK-UCL"/>
</dbReference>
<dbReference type="FunFam" id="1.20.1440.80:FF:000001">
    <property type="entry name" value="Gap junction alpha-1"/>
    <property type="match status" value="1"/>
</dbReference>
<dbReference type="Gene3D" id="1.20.1440.80">
    <property type="entry name" value="Gap junction channel protein cysteine-rich domain"/>
    <property type="match status" value="1"/>
</dbReference>
<dbReference type="InterPro" id="IPR000500">
    <property type="entry name" value="Connexin"/>
</dbReference>
<dbReference type="InterPro" id="IPR019570">
    <property type="entry name" value="Connexin_CCC"/>
</dbReference>
<dbReference type="InterPro" id="IPR017990">
    <property type="entry name" value="Connexin_CS"/>
</dbReference>
<dbReference type="InterPro" id="IPR013092">
    <property type="entry name" value="Connexin_N"/>
</dbReference>
<dbReference type="InterPro" id="IPR038359">
    <property type="entry name" value="Connexin_N_sf"/>
</dbReference>
<dbReference type="PANTHER" id="PTHR11984">
    <property type="entry name" value="CONNEXIN"/>
    <property type="match status" value="1"/>
</dbReference>
<dbReference type="PANTHER" id="PTHR11984:SF23">
    <property type="entry name" value="GAP JUNCTION BETA-6 PROTEIN"/>
    <property type="match status" value="1"/>
</dbReference>
<dbReference type="Pfam" id="PF00029">
    <property type="entry name" value="Connexin"/>
    <property type="match status" value="1"/>
</dbReference>
<dbReference type="PRINTS" id="PR00206">
    <property type="entry name" value="CONNEXIN"/>
</dbReference>
<dbReference type="SMART" id="SM00037">
    <property type="entry name" value="CNX"/>
    <property type="match status" value="1"/>
</dbReference>
<dbReference type="SMART" id="SM01089">
    <property type="entry name" value="Connexin_CCC"/>
    <property type="match status" value="1"/>
</dbReference>
<dbReference type="PROSITE" id="PS00407">
    <property type="entry name" value="CONNEXINS_1"/>
    <property type="match status" value="1"/>
</dbReference>
<dbReference type="PROSITE" id="PS00408">
    <property type="entry name" value="CONNEXINS_2"/>
    <property type="match status" value="1"/>
</dbReference>